<name>Y244_NEIG1</name>
<accession>Q5F9Z0</accession>
<sequence>MEKKFLDILVCPVTKGRLEYHQDKQELWSRQAKLAYPIKDGIPYMLENEARALSEEELKA</sequence>
<gene>
    <name type="ordered locus">NGO_0244</name>
</gene>
<reference key="1">
    <citation type="submission" date="2003-03" db="EMBL/GenBank/DDBJ databases">
        <title>The complete genome sequence of Neisseria gonorrhoeae.</title>
        <authorList>
            <person name="Lewis L.A."/>
            <person name="Gillaspy A.F."/>
            <person name="McLaughlin R.E."/>
            <person name="Gipson M."/>
            <person name="Ducey T.F."/>
            <person name="Ownbey T."/>
            <person name="Hartman K."/>
            <person name="Nydick C."/>
            <person name="Carson M.B."/>
            <person name="Vaughn J."/>
            <person name="Thomson C."/>
            <person name="Song L."/>
            <person name="Lin S."/>
            <person name="Yuan X."/>
            <person name="Najar F."/>
            <person name="Zhan M."/>
            <person name="Ren Q."/>
            <person name="Zhu H."/>
            <person name="Qi S."/>
            <person name="Kenton S.M."/>
            <person name="Lai H."/>
            <person name="White J.D."/>
            <person name="Clifton S."/>
            <person name="Roe B.A."/>
            <person name="Dyer D.W."/>
        </authorList>
    </citation>
    <scope>NUCLEOTIDE SEQUENCE [LARGE SCALE GENOMIC DNA]</scope>
    <source>
        <strain>ATCC 700825 / FA 1090</strain>
    </source>
</reference>
<comment type="similarity">
    <text evidence="1">Belongs to the UPF0434 family.</text>
</comment>
<proteinExistence type="inferred from homology"/>
<organism>
    <name type="scientific">Neisseria gonorrhoeae (strain ATCC 700825 / FA 1090)</name>
    <dbReference type="NCBI Taxonomy" id="242231"/>
    <lineage>
        <taxon>Bacteria</taxon>
        <taxon>Pseudomonadati</taxon>
        <taxon>Pseudomonadota</taxon>
        <taxon>Betaproteobacteria</taxon>
        <taxon>Neisseriales</taxon>
        <taxon>Neisseriaceae</taxon>
        <taxon>Neisseria</taxon>
    </lineage>
</organism>
<dbReference type="EMBL" id="AE004969">
    <property type="protein sequence ID" value="AAW88997.1"/>
    <property type="molecule type" value="Genomic_DNA"/>
</dbReference>
<dbReference type="RefSeq" id="WP_002221286.1">
    <property type="nucleotide sequence ID" value="NC_002946.2"/>
</dbReference>
<dbReference type="RefSeq" id="YP_207409.1">
    <property type="nucleotide sequence ID" value="NC_002946.2"/>
</dbReference>
<dbReference type="SMR" id="Q5F9Z0"/>
<dbReference type="STRING" id="242231.NGO_0244"/>
<dbReference type="DNASU" id="3281515"/>
<dbReference type="KEGG" id="ngo:NGO_0244"/>
<dbReference type="PATRIC" id="fig|242231.10.peg.301"/>
<dbReference type="HOGENOM" id="CLU_155659_2_2_4"/>
<dbReference type="PRO" id="PR:Q5F9Z0"/>
<dbReference type="Proteomes" id="UP000000535">
    <property type="component" value="Chromosome"/>
</dbReference>
<dbReference type="GO" id="GO:0005829">
    <property type="term" value="C:cytosol"/>
    <property type="evidence" value="ECO:0007669"/>
    <property type="project" value="TreeGrafter"/>
</dbReference>
<dbReference type="FunFam" id="2.20.25.10:FF:000002">
    <property type="entry name" value="UPF0434 protein YcaR"/>
    <property type="match status" value="1"/>
</dbReference>
<dbReference type="Gene3D" id="2.20.25.10">
    <property type="match status" value="1"/>
</dbReference>
<dbReference type="HAMAP" id="MF_01187">
    <property type="entry name" value="UPF0434"/>
    <property type="match status" value="1"/>
</dbReference>
<dbReference type="InterPro" id="IPR005651">
    <property type="entry name" value="Trm112-like"/>
</dbReference>
<dbReference type="PANTHER" id="PTHR33505:SF4">
    <property type="entry name" value="PROTEIN PREY, MITOCHONDRIAL"/>
    <property type="match status" value="1"/>
</dbReference>
<dbReference type="PANTHER" id="PTHR33505">
    <property type="entry name" value="ZGC:162634"/>
    <property type="match status" value="1"/>
</dbReference>
<dbReference type="Pfam" id="PF03966">
    <property type="entry name" value="Trm112p"/>
    <property type="match status" value="1"/>
</dbReference>
<dbReference type="SUPFAM" id="SSF158997">
    <property type="entry name" value="Trm112p-like"/>
    <property type="match status" value="1"/>
</dbReference>
<keyword id="KW-1185">Reference proteome</keyword>
<protein>
    <recommendedName>
        <fullName evidence="1">UPF0434 protein NGO_0244</fullName>
    </recommendedName>
</protein>
<feature type="chain" id="PRO_0000291115" description="UPF0434 protein NGO_0244">
    <location>
        <begin position="1"/>
        <end position="60"/>
    </location>
</feature>
<evidence type="ECO:0000255" key="1">
    <source>
        <dbReference type="HAMAP-Rule" id="MF_01187"/>
    </source>
</evidence>